<name>AZOR_MYCPU</name>
<accession>Q98QP9</accession>
<dbReference type="EC" id="1.6.5.-" evidence="1"/>
<dbReference type="EC" id="1.7.1.17" evidence="1"/>
<dbReference type="EMBL" id="AL445564">
    <property type="protein sequence ID" value="CAC13485.1"/>
    <property type="molecule type" value="Genomic_DNA"/>
</dbReference>
<dbReference type="PIR" id="H90550">
    <property type="entry name" value="H90550"/>
</dbReference>
<dbReference type="RefSeq" id="WP_010925116.1">
    <property type="nucleotide sequence ID" value="NC_002771.1"/>
</dbReference>
<dbReference type="SMR" id="Q98QP9"/>
<dbReference type="STRING" id="272635.gene:17576903"/>
<dbReference type="KEGG" id="mpu:MYPU_3120"/>
<dbReference type="eggNOG" id="COG1182">
    <property type="taxonomic scope" value="Bacteria"/>
</dbReference>
<dbReference type="HOGENOM" id="CLU_088964_2_0_14"/>
<dbReference type="BioCyc" id="MPUL272635:G1GT6-313-MONOMER"/>
<dbReference type="Proteomes" id="UP000000528">
    <property type="component" value="Chromosome"/>
</dbReference>
<dbReference type="GO" id="GO:0009055">
    <property type="term" value="F:electron transfer activity"/>
    <property type="evidence" value="ECO:0007669"/>
    <property type="project" value="UniProtKB-UniRule"/>
</dbReference>
<dbReference type="GO" id="GO:0010181">
    <property type="term" value="F:FMN binding"/>
    <property type="evidence" value="ECO:0007669"/>
    <property type="project" value="UniProtKB-UniRule"/>
</dbReference>
<dbReference type="GO" id="GO:0016652">
    <property type="term" value="F:oxidoreductase activity, acting on NAD(P)H as acceptor"/>
    <property type="evidence" value="ECO:0007669"/>
    <property type="project" value="UniProtKB-UniRule"/>
</dbReference>
<dbReference type="GO" id="GO:0016655">
    <property type="term" value="F:oxidoreductase activity, acting on NAD(P)H, quinone or similar compound as acceptor"/>
    <property type="evidence" value="ECO:0007669"/>
    <property type="project" value="InterPro"/>
</dbReference>
<dbReference type="Gene3D" id="3.40.50.360">
    <property type="match status" value="1"/>
</dbReference>
<dbReference type="HAMAP" id="MF_01216">
    <property type="entry name" value="Azoreductase_type1"/>
    <property type="match status" value="1"/>
</dbReference>
<dbReference type="InterPro" id="IPR003680">
    <property type="entry name" value="Flavodoxin_fold"/>
</dbReference>
<dbReference type="InterPro" id="IPR029039">
    <property type="entry name" value="Flavoprotein-like_sf"/>
</dbReference>
<dbReference type="InterPro" id="IPR050104">
    <property type="entry name" value="FMN-dep_NADH:Q_OxRdtase_AzoR1"/>
</dbReference>
<dbReference type="InterPro" id="IPR023048">
    <property type="entry name" value="NADH:quinone_OxRdtase_FMN_depd"/>
</dbReference>
<dbReference type="NCBIfam" id="NF002370">
    <property type="entry name" value="PRK01355.1"/>
    <property type="match status" value="1"/>
</dbReference>
<dbReference type="PANTHER" id="PTHR43741">
    <property type="entry name" value="FMN-DEPENDENT NADH-AZOREDUCTASE 1"/>
    <property type="match status" value="1"/>
</dbReference>
<dbReference type="PANTHER" id="PTHR43741:SF4">
    <property type="entry name" value="FMN-DEPENDENT NADH:QUINONE OXIDOREDUCTASE"/>
    <property type="match status" value="1"/>
</dbReference>
<dbReference type="Pfam" id="PF02525">
    <property type="entry name" value="Flavodoxin_2"/>
    <property type="match status" value="1"/>
</dbReference>
<dbReference type="SUPFAM" id="SSF52218">
    <property type="entry name" value="Flavoproteins"/>
    <property type="match status" value="1"/>
</dbReference>
<protein>
    <recommendedName>
        <fullName evidence="1">FMN-dependent NADH:quinone oxidoreductase</fullName>
        <ecNumber evidence="1">1.6.5.-</ecNumber>
    </recommendedName>
    <alternativeName>
        <fullName evidence="1">Azo-dye reductase</fullName>
    </alternativeName>
    <alternativeName>
        <fullName evidence="1">FMN-dependent NADH-azo compound oxidoreductase</fullName>
    </alternativeName>
    <alternativeName>
        <fullName evidence="1">FMN-dependent NADH-azoreductase</fullName>
        <ecNumber evidence="1">1.7.1.17</ecNumber>
    </alternativeName>
</protein>
<organism>
    <name type="scientific">Mycoplasmopsis pulmonis (strain UAB CTIP)</name>
    <name type="common">Mycoplasma pulmonis</name>
    <dbReference type="NCBI Taxonomy" id="272635"/>
    <lineage>
        <taxon>Bacteria</taxon>
        <taxon>Bacillati</taxon>
        <taxon>Mycoplasmatota</taxon>
        <taxon>Mycoplasmoidales</taxon>
        <taxon>Metamycoplasmataceae</taxon>
        <taxon>Mycoplasmopsis</taxon>
    </lineage>
</organism>
<comment type="function">
    <text evidence="1">Quinone reductase that provides resistance to thiol-specific stress caused by electrophilic quinones.</text>
</comment>
<comment type="function">
    <text evidence="1">Also exhibits azoreductase activity. Catalyzes the reductive cleavage of the azo bond in aromatic azo compounds to the corresponding amines.</text>
</comment>
<comment type="catalytic activity">
    <reaction evidence="1">
        <text>2 a quinone + NADH + H(+) = 2 a 1,4-benzosemiquinone + NAD(+)</text>
        <dbReference type="Rhea" id="RHEA:65952"/>
        <dbReference type="ChEBI" id="CHEBI:15378"/>
        <dbReference type="ChEBI" id="CHEBI:57540"/>
        <dbReference type="ChEBI" id="CHEBI:57945"/>
        <dbReference type="ChEBI" id="CHEBI:132124"/>
        <dbReference type="ChEBI" id="CHEBI:134225"/>
    </reaction>
</comment>
<comment type="catalytic activity">
    <reaction evidence="1">
        <text>N,N-dimethyl-1,4-phenylenediamine + anthranilate + 2 NAD(+) = 2-(4-dimethylaminophenyl)diazenylbenzoate + 2 NADH + 2 H(+)</text>
        <dbReference type="Rhea" id="RHEA:55872"/>
        <dbReference type="ChEBI" id="CHEBI:15378"/>
        <dbReference type="ChEBI" id="CHEBI:15783"/>
        <dbReference type="ChEBI" id="CHEBI:16567"/>
        <dbReference type="ChEBI" id="CHEBI:57540"/>
        <dbReference type="ChEBI" id="CHEBI:57945"/>
        <dbReference type="ChEBI" id="CHEBI:71579"/>
        <dbReference type="EC" id="1.7.1.17"/>
    </reaction>
</comment>
<comment type="cofactor">
    <cofactor evidence="1">
        <name>FMN</name>
        <dbReference type="ChEBI" id="CHEBI:58210"/>
    </cofactor>
    <text evidence="1">Binds 1 FMN per subunit.</text>
</comment>
<comment type="subunit">
    <text evidence="1">Homodimer.</text>
</comment>
<comment type="similarity">
    <text evidence="1">Belongs to the azoreductase type 1 family.</text>
</comment>
<gene>
    <name evidence="1" type="primary">azoR</name>
    <name type="ordered locus">MYPU_3120</name>
</gene>
<evidence type="ECO:0000255" key="1">
    <source>
        <dbReference type="HAMAP-Rule" id="MF_01216"/>
    </source>
</evidence>
<proteinExistence type="inferred from homology"/>
<feature type="chain" id="PRO_0000166346" description="FMN-dependent NADH:quinone oxidoreductase">
    <location>
        <begin position="1"/>
        <end position="198"/>
    </location>
</feature>
<feature type="binding site" evidence="1">
    <location>
        <position position="10"/>
    </location>
    <ligand>
        <name>FMN</name>
        <dbReference type="ChEBI" id="CHEBI:58210"/>
    </ligand>
</feature>
<feature type="binding site" evidence="1">
    <location>
        <begin position="16"/>
        <end position="18"/>
    </location>
    <ligand>
        <name>FMN</name>
        <dbReference type="ChEBI" id="CHEBI:58210"/>
    </ligand>
</feature>
<reference key="1">
    <citation type="journal article" date="2001" name="Nucleic Acids Res.">
        <title>The complete genome sequence of the murine respiratory pathogen Mycoplasma pulmonis.</title>
        <authorList>
            <person name="Chambaud I."/>
            <person name="Heilig R."/>
            <person name="Ferris S."/>
            <person name="Barbe V."/>
            <person name="Samson D."/>
            <person name="Galisson F."/>
            <person name="Moszer I."/>
            <person name="Dybvig K."/>
            <person name="Wroblewski H."/>
            <person name="Viari A."/>
            <person name="Rocha E.P.C."/>
            <person name="Blanchard A."/>
        </authorList>
    </citation>
    <scope>NUCLEOTIDE SEQUENCE [LARGE SCALE GENOMIC DNA]</scope>
    <source>
        <strain>UAB CTIP</strain>
    </source>
</reference>
<sequence>MAKVLVIKTSMMGANSISNVLNDKFMEYYKEKNPNDEFIYMNLNDEKMASITMTSHNMKEYFVAEYSDKYINQLKKVDKVVMSVPMTNFNVNAVTKNYLDHISVADKTFSYKYSKKGEAIGLLDHLSVQILTTQGAPLGWYPWGNHSEYLKGHWRFLGAKVADHILVDSVKIGENSKKTPQEIIEKFDGEIKKAAYSF</sequence>
<keyword id="KW-0285">Flavoprotein</keyword>
<keyword id="KW-0288">FMN</keyword>
<keyword id="KW-0520">NAD</keyword>
<keyword id="KW-0560">Oxidoreductase</keyword>
<keyword id="KW-1185">Reference proteome</keyword>